<sequence>MCACAVAGVAVSSLVVPTAESGEMKTKATAPVPQPGPIRKLARKKAKKKFRKSKALAGSGVPGSHPAAVAGRPPKAPENFSQNWKALQELLKQKSQAAEKPLVSQMDDKMHPQIIQQNRKKASDKSKGDKQRTEKAKSTRGSVTSAPTDRKILVPPTDTSGTEQKKGAKKRTYSDISSHQGALKPKWKATEAAVILNQPTPTEEDIWFDDVDPDDIEDAIGPEAAMLVRKRLGQKKRTISLEKEQAFGGLTKALALDCEMVGVGPKGEESIAARVSIVNQYGKCVYDKYVKPTEPVTDYRTAVSGIRPENLKQGEEFEVVKKEVAEMLKGRILVGHALHNDLKVLFLDHPKKKIRDTQKFKPFRSRVKSGRPSLKRLSEKILGIRVQQAEHCSIQDAQAAMRLYVMVKREWESSTANRRAPAATPQHRIKNS</sequence>
<dbReference type="EC" id="3.1.-.-"/>
<dbReference type="EMBL" id="AK079733">
    <property type="status" value="NOT_ANNOTATED_CDS"/>
    <property type="molecule type" value="mRNA"/>
</dbReference>
<dbReference type="EMBL" id="AK138894">
    <property type="protein sequence ID" value="BAE23812.1"/>
    <property type="status" value="ALT_INIT"/>
    <property type="molecule type" value="mRNA"/>
</dbReference>
<dbReference type="EMBL" id="BC060147">
    <property type="protein sequence ID" value="AAH60147.1"/>
    <property type="status" value="ALT_INIT"/>
    <property type="molecule type" value="mRNA"/>
</dbReference>
<dbReference type="CCDS" id="CCDS15819.1"/>
<dbReference type="RefSeq" id="NP_997117.2">
    <property type="nucleotide sequence ID" value="NM_207234.2"/>
</dbReference>
<dbReference type="SMR" id="Q6PAQ4"/>
<dbReference type="BioGRID" id="230657">
    <property type="interactions" value="1"/>
</dbReference>
<dbReference type="FunCoup" id="Q6PAQ4">
    <property type="interactions" value="2407"/>
</dbReference>
<dbReference type="STRING" id="10090.ENSMUSP00000109653"/>
<dbReference type="iPTMnet" id="Q6PAQ4"/>
<dbReference type="PhosphoSitePlus" id="Q6PAQ4"/>
<dbReference type="jPOST" id="Q6PAQ4"/>
<dbReference type="PaxDb" id="10090-ENSMUSP00000109653"/>
<dbReference type="PeptideAtlas" id="Q6PAQ4"/>
<dbReference type="ProteomicsDB" id="255009"/>
<dbReference type="Pumba" id="Q6PAQ4"/>
<dbReference type="Antibodypedia" id="18377">
    <property type="antibodies" value="126 antibodies from 25 providers"/>
</dbReference>
<dbReference type="DNASU" id="227656"/>
<dbReference type="Ensembl" id="ENSMUST00000114020.10">
    <property type="protein sequence ID" value="ENSMUSP00000109653.4"/>
    <property type="gene ID" value="ENSMUSG00000052406.15"/>
</dbReference>
<dbReference type="GeneID" id="227656"/>
<dbReference type="KEGG" id="mmu:227656"/>
<dbReference type="UCSC" id="uc008iwn.1">
    <property type="organism name" value="mouse"/>
</dbReference>
<dbReference type="AGR" id="MGI:2684957"/>
<dbReference type="CTD" id="57109"/>
<dbReference type="MGI" id="MGI:2684957">
    <property type="gene designation" value="Rexo4"/>
</dbReference>
<dbReference type="VEuPathDB" id="HostDB:ENSMUSG00000052406"/>
<dbReference type="eggNOG" id="KOG2249">
    <property type="taxonomic scope" value="Eukaryota"/>
</dbReference>
<dbReference type="GeneTree" id="ENSGT00940000159607"/>
<dbReference type="InParanoid" id="Q6PAQ4"/>
<dbReference type="OMA" id="WEEDIRT"/>
<dbReference type="OrthoDB" id="8191639at2759"/>
<dbReference type="PhylomeDB" id="Q6PAQ4"/>
<dbReference type="TreeFam" id="TF313504"/>
<dbReference type="BioGRID-ORCS" id="227656">
    <property type="hits" value="5 hits in 78 CRISPR screens"/>
</dbReference>
<dbReference type="ChiTaRS" id="Rexo4">
    <property type="organism name" value="mouse"/>
</dbReference>
<dbReference type="PRO" id="PR:Q6PAQ4"/>
<dbReference type="Proteomes" id="UP000000589">
    <property type="component" value="Chromosome 2"/>
</dbReference>
<dbReference type="RNAct" id="Q6PAQ4">
    <property type="molecule type" value="protein"/>
</dbReference>
<dbReference type="Bgee" id="ENSMUSG00000052406">
    <property type="expression patterns" value="Expressed in paneth cell and 254 other cell types or tissues"/>
</dbReference>
<dbReference type="ExpressionAtlas" id="Q6PAQ4">
    <property type="expression patterns" value="baseline and differential"/>
</dbReference>
<dbReference type="GO" id="GO:0016607">
    <property type="term" value="C:nuclear speck"/>
    <property type="evidence" value="ECO:0007669"/>
    <property type="project" value="Ensembl"/>
</dbReference>
<dbReference type="GO" id="GO:0005730">
    <property type="term" value="C:nucleolus"/>
    <property type="evidence" value="ECO:0007669"/>
    <property type="project" value="UniProtKB-SubCell"/>
</dbReference>
<dbReference type="GO" id="GO:0008408">
    <property type="term" value="F:3'-5' exonuclease activity"/>
    <property type="evidence" value="ECO:0007669"/>
    <property type="project" value="Ensembl"/>
</dbReference>
<dbReference type="GO" id="GO:0003690">
    <property type="term" value="F:double-stranded DNA binding"/>
    <property type="evidence" value="ECO:0007669"/>
    <property type="project" value="Ensembl"/>
</dbReference>
<dbReference type="GO" id="GO:0004519">
    <property type="term" value="F:endonuclease activity"/>
    <property type="evidence" value="ECO:0007669"/>
    <property type="project" value="Ensembl"/>
</dbReference>
<dbReference type="GO" id="GO:0003697">
    <property type="term" value="F:single-stranded DNA binding"/>
    <property type="evidence" value="ECO:0007669"/>
    <property type="project" value="Ensembl"/>
</dbReference>
<dbReference type="GO" id="GO:0006308">
    <property type="term" value="P:DNA catabolic process"/>
    <property type="evidence" value="ECO:0007669"/>
    <property type="project" value="Ensembl"/>
</dbReference>
<dbReference type="GO" id="GO:0006281">
    <property type="term" value="P:DNA repair"/>
    <property type="evidence" value="ECO:0007669"/>
    <property type="project" value="Ensembl"/>
</dbReference>
<dbReference type="GO" id="GO:0006364">
    <property type="term" value="P:rRNA processing"/>
    <property type="evidence" value="ECO:0007669"/>
    <property type="project" value="InterPro"/>
</dbReference>
<dbReference type="CDD" id="cd06144">
    <property type="entry name" value="REX4_like"/>
    <property type="match status" value="1"/>
</dbReference>
<dbReference type="FunFam" id="3.30.420.10:FF:000007">
    <property type="entry name" value="Interferon-stimulated exonuclease gene 20"/>
    <property type="match status" value="1"/>
</dbReference>
<dbReference type="Gene3D" id="3.30.420.10">
    <property type="entry name" value="Ribonuclease H-like superfamily/Ribonuclease H"/>
    <property type="match status" value="1"/>
</dbReference>
<dbReference type="InterPro" id="IPR013520">
    <property type="entry name" value="Exonuclease_RNaseT/DNA_pol3"/>
</dbReference>
<dbReference type="InterPro" id="IPR037431">
    <property type="entry name" value="REX4_DEDDh_dom"/>
</dbReference>
<dbReference type="InterPro" id="IPR047021">
    <property type="entry name" value="REXO1/3/4-like"/>
</dbReference>
<dbReference type="InterPro" id="IPR012337">
    <property type="entry name" value="RNaseH-like_sf"/>
</dbReference>
<dbReference type="InterPro" id="IPR036397">
    <property type="entry name" value="RNaseH_sf"/>
</dbReference>
<dbReference type="PANTHER" id="PTHR12801:SF158">
    <property type="entry name" value="RNA EXONUCLEASE 4"/>
    <property type="match status" value="1"/>
</dbReference>
<dbReference type="PANTHER" id="PTHR12801">
    <property type="entry name" value="RNA EXONUCLEASE REXO1 / RECO3 FAMILY MEMBER-RELATED"/>
    <property type="match status" value="1"/>
</dbReference>
<dbReference type="Pfam" id="PF00929">
    <property type="entry name" value="RNase_T"/>
    <property type="match status" value="1"/>
</dbReference>
<dbReference type="SMART" id="SM00479">
    <property type="entry name" value="EXOIII"/>
    <property type="match status" value="1"/>
</dbReference>
<dbReference type="SUPFAM" id="SSF53098">
    <property type="entry name" value="Ribonuclease H-like"/>
    <property type="match status" value="1"/>
</dbReference>
<name>REXO4_MOUSE</name>
<comment type="function">
    <text>May function as an exonuclease.</text>
</comment>
<comment type="subunit">
    <text evidence="1">Can bind ESR1 and ESR2. This interaction is abrogated by estrogen and augmented by tamoxifen treatment (By similarity).</text>
</comment>
<comment type="subcellular location">
    <subcellularLocation>
        <location evidence="1">Nucleus</location>
        <location evidence="1">Nucleolus</location>
    </subcellularLocation>
</comment>
<comment type="similarity">
    <text evidence="4">Belongs to the REXO4 family.</text>
</comment>
<comment type="sequence caution" evidence="4">
    <conflict type="erroneous initiation">
        <sequence resource="EMBL-CDS" id="AAH60147"/>
    </conflict>
</comment>
<comment type="sequence caution" evidence="4">
    <conflict type="miscellaneous discrepancy">
        <sequence resource="EMBL" id="AK079733"/>
    </conflict>
    <text>Intron retention.</text>
</comment>
<comment type="sequence caution" evidence="4">
    <conflict type="erroneous initiation">
        <sequence resource="EMBL-CDS" id="BAE23812"/>
    </conflict>
</comment>
<accession>Q6PAQ4</accession>
<accession>Q3UU17</accession>
<accession>Q8C524</accession>
<gene>
    <name type="primary">Rexo4</name>
    <name type="synonym">Gm111</name>
    <name type="synonym">Pmc2</name>
    <name type="synonym">Xpmc2h</name>
</gene>
<evidence type="ECO:0000250" key="1"/>
<evidence type="ECO:0000250" key="2">
    <source>
        <dbReference type="UniProtKB" id="Q9GZR2"/>
    </source>
</evidence>
<evidence type="ECO:0000256" key="3">
    <source>
        <dbReference type="SAM" id="MobiDB-lite"/>
    </source>
</evidence>
<evidence type="ECO:0000305" key="4"/>
<protein>
    <recommendedName>
        <fullName>RNA exonuclease 4</fullName>
        <ecNumber>3.1.-.-</ecNumber>
    </recommendedName>
    <alternativeName>
        <fullName>Exonuclease XPMC2</fullName>
    </alternativeName>
    <alternativeName>
        <fullName>Prevents mitotic catastrophe 2 protein homolog</fullName>
    </alternativeName>
</protein>
<proteinExistence type="evidence at transcript level"/>
<organism>
    <name type="scientific">Mus musculus</name>
    <name type="common">Mouse</name>
    <dbReference type="NCBI Taxonomy" id="10090"/>
    <lineage>
        <taxon>Eukaryota</taxon>
        <taxon>Metazoa</taxon>
        <taxon>Chordata</taxon>
        <taxon>Craniata</taxon>
        <taxon>Vertebrata</taxon>
        <taxon>Euteleostomi</taxon>
        <taxon>Mammalia</taxon>
        <taxon>Eutheria</taxon>
        <taxon>Euarchontoglires</taxon>
        <taxon>Glires</taxon>
        <taxon>Rodentia</taxon>
        <taxon>Myomorpha</taxon>
        <taxon>Muroidea</taxon>
        <taxon>Muridae</taxon>
        <taxon>Murinae</taxon>
        <taxon>Mus</taxon>
        <taxon>Mus</taxon>
    </lineage>
</organism>
<feature type="chain" id="PRO_0000131704" description="RNA exonuclease 4">
    <location>
        <begin position="1"/>
        <end position="432"/>
    </location>
</feature>
<feature type="domain" description="Exonuclease">
    <location>
        <begin position="230"/>
        <end position="381"/>
    </location>
</feature>
<feature type="region of interest" description="Disordered" evidence="3">
    <location>
        <begin position="42"/>
        <end position="177"/>
    </location>
</feature>
<feature type="compositionally biased region" description="Basic residues" evidence="3">
    <location>
        <begin position="42"/>
        <end position="54"/>
    </location>
</feature>
<feature type="compositionally biased region" description="Basic and acidic residues" evidence="3">
    <location>
        <begin position="121"/>
        <end position="137"/>
    </location>
</feature>
<feature type="modified residue" description="Phosphoserine" evidence="2">
    <location>
        <position position="123"/>
    </location>
</feature>
<feature type="cross-link" description="Glycyl lysine isopeptide (Lys-Gly) (interchain with G-Cter in SUMO2)" evidence="2">
    <location>
        <position position="127"/>
    </location>
</feature>
<reference key="1">
    <citation type="journal article" date="2005" name="Science">
        <title>The transcriptional landscape of the mammalian genome.</title>
        <authorList>
            <person name="Carninci P."/>
            <person name="Kasukawa T."/>
            <person name="Katayama S."/>
            <person name="Gough J."/>
            <person name="Frith M.C."/>
            <person name="Maeda N."/>
            <person name="Oyama R."/>
            <person name="Ravasi T."/>
            <person name="Lenhard B."/>
            <person name="Wells C."/>
            <person name="Kodzius R."/>
            <person name="Shimokawa K."/>
            <person name="Bajic V.B."/>
            <person name="Brenner S.E."/>
            <person name="Batalov S."/>
            <person name="Forrest A.R."/>
            <person name="Zavolan M."/>
            <person name="Davis M.J."/>
            <person name="Wilming L.G."/>
            <person name="Aidinis V."/>
            <person name="Allen J.E."/>
            <person name="Ambesi-Impiombato A."/>
            <person name="Apweiler R."/>
            <person name="Aturaliya R.N."/>
            <person name="Bailey T.L."/>
            <person name="Bansal M."/>
            <person name="Baxter L."/>
            <person name="Beisel K.W."/>
            <person name="Bersano T."/>
            <person name="Bono H."/>
            <person name="Chalk A.M."/>
            <person name="Chiu K.P."/>
            <person name="Choudhary V."/>
            <person name="Christoffels A."/>
            <person name="Clutterbuck D.R."/>
            <person name="Crowe M.L."/>
            <person name="Dalla E."/>
            <person name="Dalrymple B.P."/>
            <person name="de Bono B."/>
            <person name="Della Gatta G."/>
            <person name="di Bernardo D."/>
            <person name="Down T."/>
            <person name="Engstrom P."/>
            <person name="Fagiolini M."/>
            <person name="Faulkner G."/>
            <person name="Fletcher C.F."/>
            <person name="Fukushima T."/>
            <person name="Furuno M."/>
            <person name="Futaki S."/>
            <person name="Gariboldi M."/>
            <person name="Georgii-Hemming P."/>
            <person name="Gingeras T.R."/>
            <person name="Gojobori T."/>
            <person name="Green R.E."/>
            <person name="Gustincich S."/>
            <person name="Harbers M."/>
            <person name="Hayashi Y."/>
            <person name="Hensch T.K."/>
            <person name="Hirokawa N."/>
            <person name="Hill D."/>
            <person name="Huminiecki L."/>
            <person name="Iacono M."/>
            <person name="Ikeo K."/>
            <person name="Iwama A."/>
            <person name="Ishikawa T."/>
            <person name="Jakt M."/>
            <person name="Kanapin A."/>
            <person name="Katoh M."/>
            <person name="Kawasawa Y."/>
            <person name="Kelso J."/>
            <person name="Kitamura H."/>
            <person name="Kitano H."/>
            <person name="Kollias G."/>
            <person name="Krishnan S.P."/>
            <person name="Kruger A."/>
            <person name="Kummerfeld S.K."/>
            <person name="Kurochkin I.V."/>
            <person name="Lareau L.F."/>
            <person name="Lazarevic D."/>
            <person name="Lipovich L."/>
            <person name="Liu J."/>
            <person name="Liuni S."/>
            <person name="McWilliam S."/>
            <person name="Madan Babu M."/>
            <person name="Madera M."/>
            <person name="Marchionni L."/>
            <person name="Matsuda H."/>
            <person name="Matsuzawa S."/>
            <person name="Miki H."/>
            <person name="Mignone F."/>
            <person name="Miyake S."/>
            <person name="Morris K."/>
            <person name="Mottagui-Tabar S."/>
            <person name="Mulder N."/>
            <person name="Nakano N."/>
            <person name="Nakauchi H."/>
            <person name="Ng P."/>
            <person name="Nilsson R."/>
            <person name="Nishiguchi S."/>
            <person name="Nishikawa S."/>
            <person name="Nori F."/>
            <person name="Ohara O."/>
            <person name="Okazaki Y."/>
            <person name="Orlando V."/>
            <person name="Pang K.C."/>
            <person name="Pavan W.J."/>
            <person name="Pavesi G."/>
            <person name="Pesole G."/>
            <person name="Petrovsky N."/>
            <person name="Piazza S."/>
            <person name="Reed J."/>
            <person name="Reid J.F."/>
            <person name="Ring B.Z."/>
            <person name="Ringwald M."/>
            <person name="Rost B."/>
            <person name="Ruan Y."/>
            <person name="Salzberg S.L."/>
            <person name="Sandelin A."/>
            <person name="Schneider C."/>
            <person name="Schoenbach C."/>
            <person name="Sekiguchi K."/>
            <person name="Semple C.A."/>
            <person name="Seno S."/>
            <person name="Sessa L."/>
            <person name="Sheng Y."/>
            <person name="Shibata Y."/>
            <person name="Shimada H."/>
            <person name="Shimada K."/>
            <person name="Silva D."/>
            <person name="Sinclair B."/>
            <person name="Sperling S."/>
            <person name="Stupka E."/>
            <person name="Sugiura K."/>
            <person name="Sultana R."/>
            <person name="Takenaka Y."/>
            <person name="Taki K."/>
            <person name="Tammoja K."/>
            <person name="Tan S.L."/>
            <person name="Tang S."/>
            <person name="Taylor M.S."/>
            <person name="Tegner J."/>
            <person name="Teichmann S.A."/>
            <person name="Ueda H.R."/>
            <person name="van Nimwegen E."/>
            <person name="Verardo R."/>
            <person name="Wei C.L."/>
            <person name="Yagi K."/>
            <person name="Yamanishi H."/>
            <person name="Zabarovsky E."/>
            <person name="Zhu S."/>
            <person name="Zimmer A."/>
            <person name="Hide W."/>
            <person name="Bult C."/>
            <person name="Grimmond S.M."/>
            <person name="Teasdale R.D."/>
            <person name="Liu E.T."/>
            <person name="Brusic V."/>
            <person name="Quackenbush J."/>
            <person name="Wahlestedt C."/>
            <person name="Mattick J.S."/>
            <person name="Hume D.A."/>
            <person name="Kai C."/>
            <person name="Sasaki D."/>
            <person name="Tomaru Y."/>
            <person name="Fukuda S."/>
            <person name="Kanamori-Katayama M."/>
            <person name="Suzuki M."/>
            <person name="Aoki J."/>
            <person name="Arakawa T."/>
            <person name="Iida J."/>
            <person name="Imamura K."/>
            <person name="Itoh M."/>
            <person name="Kato T."/>
            <person name="Kawaji H."/>
            <person name="Kawagashira N."/>
            <person name="Kawashima T."/>
            <person name="Kojima M."/>
            <person name="Kondo S."/>
            <person name="Konno H."/>
            <person name="Nakano K."/>
            <person name="Ninomiya N."/>
            <person name="Nishio T."/>
            <person name="Okada M."/>
            <person name="Plessy C."/>
            <person name="Shibata K."/>
            <person name="Shiraki T."/>
            <person name="Suzuki S."/>
            <person name="Tagami M."/>
            <person name="Waki K."/>
            <person name="Watahiki A."/>
            <person name="Okamura-Oho Y."/>
            <person name="Suzuki H."/>
            <person name="Kawai J."/>
            <person name="Hayashizaki Y."/>
        </authorList>
    </citation>
    <scope>NUCLEOTIDE SEQUENCE [LARGE SCALE MRNA] OF 1-350</scope>
    <source>
        <strain>C57BL/6J</strain>
        <tissue>Thymus</tissue>
    </source>
</reference>
<reference key="2">
    <citation type="journal article" date="2004" name="Genome Res.">
        <title>The status, quality, and expansion of the NIH full-length cDNA project: the Mammalian Gene Collection (MGC).</title>
        <authorList>
            <consortium name="The MGC Project Team"/>
        </authorList>
    </citation>
    <scope>NUCLEOTIDE SEQUENCE [LARGE SCALE MRNA] OF 3-432</scope>
    <source>
        <strain>C57BL/6J</strain>
        <tissue>Brain</tissue>
    </source>
</reference>
<keyword id="KW-0269">Exonuclease</keyword>
<keyword id="KW-0378">Hydrolase</keyword>
<keyword id="KW-1017">Isopeptide bond</keyword>
<keyword id="KW-0540">Nuclease</keyword>
<keyword id="KW-0539">Nucleus</keyword>
<keyword id="KW-0597">Phosphoprotein</keyword>
<keyword id="KW-1185">Reference proteome</keyword>
<keyword id="KW-0832">Ubl conjugation</keyword>